<comment type="function">
    <text evidence="7">May dephosphorylate MAPK13, ATF2, ERBB3, PDGFRB and SNX6 (PubMed:22792334).</text>
</comment>
<comment type="function">
    <molecule>Isoform 3</molecule>
    <text evidence="1 2">May play a role in the regulation of oligodendrocyte differentiation. May play a role in the regulation of myelin formation (By similarity). Involved in the regulation of Erk1/2 phosphorylation in Schwann cells; the signaling may be linked to the regulation of myelination (By similarity).</text>
</comment>
<comment type="catalytic activity">
    <reaction evidence="4 7">
        <text>O-phospho-L-tyrosyl-[protein] + H2O = L-tyrosyl-[protein] + phosphate</text>
        <dbReference type="Rhea" id="RHEA:10684"/>
        <dbReference type="Rhea" id="RHEA-COMP:10136"/>
        <dbReference type="Rhea" id="RHEA-COMP:20101"/>
        <dbReference type="ChEBI" id="CHEBI:15377"/>
        <dbReference type="ChEBI" id="CHEBI:43474"/>
        <dbReference type="ChEBI" id="CHEBI:46858"/>
        <dbReference type="ChEBI" id="CHEBI:61978"/>
        <dbReference type="EC" id="3.1.3.48"/>
    </reaction>
</comment>
<comment type="catalytic activity">
    <reaction>
        <text>O-phospho-L-seryl-[protein] + H2O = L-seryl-[protein] + phosphate</text>
        <dbReference type="Rhea" id="RHEA:20629"/>
        <dbReference type="Rhea" id="RHEA-COMP:9863"/>
        <dbReference type="Rhea" id="RHEA-COMP:11604"/>
        <dbReference type="ChEBI" id="CHEBI:15377"/>
        <dbReference type="ChEBI" id="CHEBI:29999"/>
        <dbReference type="ChEBI" id="CHEBI:43474"/>
        <dbReference type="ChEBI" id="CHEBI:83421"/>
        <dbReference type="EC" id="3.1.3.16"/>
    </reaction>
</comment>
<comment type="catalytic activity">
    <reaction>
        <text>O-phospho-L-threonyl-[protein] + H2O = L-threonyl-[protein] + phosphate</text>
        <dbReference type="Rhea" id="RHEA:47004"/>
        <dbReference type="Rhea" id="RHEA-COMP:11060"/>
        <dbReference type="Rhea" id="RHEA-COMP:11605"/>
        <dbReference type="ChEBI" id="CHEBI:15377"/>
        <dbReference type="ChEBI" id="CHEBI:30013"/>
        <dbReference type="ChEBI" id="CHEBI:43474"/>
        <dbReference type="ChEBI" id="CHEBI:61977"/>
        <dbReference type="EC" id="3.1.3.16"/>
    </reaction>
</comment>
<comment type="interaction">
    <interactant intactId="EBI-1752795">
        <id>Q9H1R2</id>
    </interactant>
    <interactant intactId="EBI-389883">
        <id>P16333</id>
        <label>NCK1</label>
    </interactant>
    <organismsDiffer>false</organismsDiffer>
    <experiments>2</experiments>
</comment>
<comment type="interaction">
    <interactant intactId="EBI-1752795">
        <id>Q9H1R2</id>
    </interactant>
    <interactant intactId="EBI-79387">
        <id>P19174</id>
        <label>PLCG1</label>
    </interactant>
    <organismsDiffer>false</organismsDiffer>
    <experiments>2</experiments>
</comment>
<comment type="subcellular location">
    <subcellularLocation>
        <location evidence="12">Cytoplasm</location>
    </subcellularLocation>
</comment>
<comment type="subcellular location">
    <molecule>Isoform 3</molecule>
    <subcellularLocation>
        <location>Cell membrane</location>
        <topology>Lipid-anchor</topology>
        <orientation>Cytoplasmic side</orientation>
    </subcellularLocation>
</comment>
<comment type="alternative products">
    <event type="alternative splicing"/>
    <isoform>
        <id>Q9H1R2-1</id>
        <name>1</name>
        <sequence type="displayed"/>
    </isoform>
    <isoform>
        <id>Q9H1R2-2</id>
        <name>2</name>
        <sequence type="described" ref="VSP_007292 VSP_007293"/>
    </isoform>
    <isoform>
        <id>Q9H1R2-3</id>
        <name>3</name>
        <name>A</name>
        <sequence type="described" ref="VSP_019228 VSP_007292 VSP_007293"/>
    </isoform>
    <isoform>
        <id>Q9H1R2-4</id>
        <name>4</name>
        <sequence type="described" ref="VSP_043107 VSP_007292 VSP_007293"/>
    </isoform>
</comment>
<comment type="tissue specificity">
    <text evidence="6 7">Highly expressed in testis (PubMed:15138252). Expressed in brain; up-regulated in patients with multiple sclerosis gray matter lesions (PubMed:22792334).</text>
</comment>
<comment type="similarity">
    <text evidence="11">Belongs to the protein-tyrosine phosphatase family. Non-receptor class dual specificity subfamily.</text>
</comment>
<comment type="caution">
    <text evidence="11">Although assigned as two separate genes (c20orf57 and DUSP15), it is probable that C20orf57 does not exist by itself and is a part of the DUSP15 gene.</text>
</comment>
<organism>
    <name type="scientific">Homo sapiens</name>
    <name type="common">Human</name>
    <dbReference type="NCBI Taxonomy" id="9606"/>
    <lineage>
        <taxon>Eukaryota</taxon>
        <taxon>Metazoa</taxon>
        <taxon>Chordata</taxon>
        <taxon>Craniata</taxon>
        <taxon>Vertebrata</taxon>
        <taxon>Euteleostomi</taxon>
        <taxon>Mammalia</taxon>
        <taxon>Eutheria</taxon>
        <taxon>Euarchontoglires</taxon>
        <taxon>Primates</taxon>
        <taxon>Haplorrhini</taxon>
        <taxon>Catarrhini</taxon>
        <taxon>Hominidae</taxon>
        <taxon>Homo</taxon>
    </lineage>
</organism>
<feature type="chain" id="PRO_0000094824" description="Dual specificity protein phosphatase 15">
    <location>
        <begin position="1"/>
        <end position="295"/>
    </location>
</feature>
<feature type="domain" description="Tyrosine-protein phosphatase" evidence="3">
    <location>
        <begin position="1"/>
        <end position="141"/>
    </location>
</feature>
<feature type="region of interest" description="Disordered" evidence="5">
    <location>
        <begin position="251"/>
        <end position="272"/>
    </location>
</feature>
<feature type="compositionally biased region" description="Polar residues" evidence="5">
    <location>
        <begin position="251"/>
        <end position="270"/>
    </location>
</feature>
<feature type="active site" description="Phosphocysteine intermediate" evidence="3">
    <location>
        <position position="85"/>
    </location>
</feature>
<feature type="splice variant" id="VSP_043107" description="In isoform 4." evidence="8">
    <location>
        <begin position="1"/>
        <end position="100"/>
    </location>
</feature>
<feature type="splice variant" id="VSP_019228" description="In isoform 3." evidence="10">
    <original>MTEG</original>
    <variation>MGNGMTK</variation>
    <location>
        <begin position="1"/>
        <end position="4"/>
    </location>
</feature>
<feature type="splice variant" id="VSP_007292" description="In isoform 2, isoform 3 and isoform 4." evidence="8 10">
    <original>GARHRTSKTSGAQCPPMTSATCLLAARVALLSAALVREATGRTAQRCRLSPRAAAERLLGPPPHVAAGWSPDPKYQICLCFGEEDPGPTQ</original>
    <variation>LRRQLEERFGESPFRDEEELRALLPLCKRCRQGSATSASSAGPHSAASEGTVQRLVPRTPREAHRPLPLLARVKQTFSCLPRCLSRKGGK</variation>
    <location>
        <begin position="143"/>
        <end position="232"/>
    </location>
</feature>
<feature type="splice variant" id="VSP_007293" description="In isoform 2, isoform 3 and isoform 4." evidence="8 10">
    <location>
        <begin position="233"/>
        <end position="295"/>
    </location>
</feature>
<feature type="mutagenesis site" description="Loss of phosphatase activity." evidence="6">
    <original>C</original>
    <variation>S</variation>
    <location>
        <position position="85"/>
    </location>
</feature>
<feature type="strand" evidence="14">
    <location>
        <begin position="9"/>
        <end position="12"/>
    </location>
</feature>
<feature type="helix" evidence="14">
    <location>
        <begin position="16"/>
        <end position="18"/>
    </location>
</feature>
<feature type="helix" evidence="14">
    <location>
        <begin position="20"/>
        <end position="25"/>
    </location>
</feature>
<feature type="strand" evidence="14">
    <location>
        <begin position="30"/>
        <end position="34"/>
    </location>
</feature>
<feature type="strand" evidence="14">
    <location>
        <begin position="46"/>
        <end position="50"/>
    </location>
</feature>
<feature type="helix" evidence="14">
    <location>
        <begin position="60"/>
        <end position="63"/>
    </location>
</feature>
<feature type="helix" evidence="14">
    <location>
        <begin position="64"/>
        <end position="76"/>
    </location>
</feature>
<feature type="strand" evidence="14">
    <location>
        <begin position="81"/>
        <end position="85"/>
    </location>
</feature>
<feature type="strand" evidence="14">
    <location>
        <begin position="88"/>
        <end position="90"/>
    </location>
</feature>
<feature type="helix" evidence="14">
    <location>
        <begin position="91"/>
        <end position="104"/>
    </location>
</feature>
<feature type="helix" evidence="14">
    <location>
        <begin position="108"/>
        <end position="117"/>
    </location>
</feature>
<feature type="helix" evidence="14">
    <location>
        <begin position="126"/>
        <end position="137"/>
    </location>
</feature>
<feature type="helix" evidence="14">
    <location>
        <begin position="139"/>
        <end position="146"/>
    </location>
</feature>
<feature type="initiator methionine" description="Removed" evidence="11">
    <location sequence="Q9H1R2-3">
        <position position="1"/>
    </location>
</feature>
<feature type="lipid moiety-binding region" description="N-myristoyl glycine" evidence="6">
    <location sequence="Q9H1R2-3">
        <position position="2"/>
    </location>
</feature>
<gene>
    <name evidence="13" type="primary">DUSP15</name>
    <name evidence="13" type="synonym">C20orf57</name>
    <name evidence="9" type="synonym">VHY</name>
</gene>
<keyword id="KW-0002">3D-structure</keyword>
<keyword id="KW-0025">Alternative splicing</keyword>
<keyword id="KW-1003">Cell membrane</keyword>
<keyword id="KW-0963">Cytoplasm</keyword>
<keyword id="KW-0378">Hydrolase</keyword>
<keyword id="KW-0449">Lipoprotein</keyword>
<keyword id="KW-0472">Membrane</keyword>
<keyword id="KW-0519">Myristate</keyword>
<keyword id="KW-0904">Protein phosphatase</keyword>
<keyword id="KW-1267">Proteomics identification</keyword>
<keyword id="KW-1185">Reference proteome</keyword>
<reference key="1">
    <citation type="journal article" date="2004" name="Nat. Genet.">
        <title>Complete sequencing and characterization of 21,243 full-length human cDNAs.</title>
        <authorList>
            <person name="Ota T."/>
            <person name="Suzuki Y."/>
            <person name="Nishikawa T."/>
            <person name="Otsuki T."/>
            <person name="Sugiyama T."/>
            <person name="Irie R."/>
            <person name="Wakamatsu A."/>
            <person name="Hayashi K."/>
            <person name="Sato H."/>
            <person name="Nagai K."/>
            <person name="Kimura K."/>
            <person name="Makita H."/>
            <person name="Sekine M."/>
            <person name="Obayashi M."/>
            <person name="Nishi T."/>
            <person name="Shibahara T."/>
            <person name="Tanaka T."/>
            <person name="Ishii S."/>
            <person name="Yamamoto J."/>
            <person name="Saito K."/>
            <person name="Kawai Y."/>
            <person name="Isono Y."/>
            <person name="Nakamura Y."/>
            <person name="Nagahari K."/>
            <person name="Murakami K."/>
            <person name="Yasuda T."/>
            <person name="Iwayanagi T."/>
            <person name="Wagatsuma M."/>
            <person name="Shiratori A."/>
            <person name="Sudo H."/>
            <person name="Hosoiri T."/>
            <person name="Kaku Y."/>
            <person name="Kodaira H."/>
            <person name="Kondo H."/>
            <person name="Sugawara M."/>
            <person name="Takahashi M."/>
            <person name="Kanda K."/>
            <person name="Yokoi T."/>
            <person name="Furuya T."/>
            <person name="Kikkawa E."/>
            <person name="Omura Y."/>
            <person name="Abe K."/>
            <person name="Kamihara K."/>
            <person name="Katsuta N."/>
            <person name="Sato K."/>
            <person name="Tanikawa M."/>
            <person name="Yamazaki M."/>
            <person name="Ninomiya K."/>
            <person name="Ishibashi T."/>
            <person name="Yamashita H."/>
            <person name="Murakawa K."/>
            <person name="Fujimori K."/>
            <person name="Tanai H."/>
            <person name="Kimata M."/>
            <person name="Watanabe M."/>
            <person name="Hiraoka S."/>
            <person name="Chiba Y."/>
            <person name="Ishida S."/>
            <person name="Ono Y."/>
            <person name="Takiguchi S."/>
            <person name="Watanabe S."/>
            <person name="Yosida M."/>
            <person name="Hotuta T."/>
            <person name="Kusano J."/>
            <person name="Kanehori K."/>
            <person name="Takahashi-Fujii A."/>
            <person name="Hara H."/>
            <person name="Tanase T.-O."/>
            <person name="Nomura Y."/>
            <person name="Togiya S."/>
            <person name="Komai F."/>
            <person name="Hara R."/>
            <person name="Takeuchi K."/>
            <person name="Arita M."/>
            <person name="Imose N."/>
            <person name="Musashino K."/>
            <person name="Yuuki H."/>
            <person name="Oshima A."/>
            <person name="Sasaki N."/>
            <person name="Aotsuka S."/>
            <person name="Yoshikawa Y."/>
            <person name="Matsunawa H."/>
            <person name="Ichihara T."/>
            <person name="Shiohata N."/>
            <person name="Sano S."/>
            <person name="Moriya S."/>
            <person name="Momiyama H."/>
            <person name="Satoh N."/>
            <person name="Takami S."/>
            <person name="Terashima Y."/>
            <person name="Suzuki O."/>
            <person name="Nakagawa S."/>
            <person name="Senoh A."/>
            <person name="Mizoguchi H."/>
            <person name="Goto Y."/>
            <person name="Shimizu F."/>
            <person name="Wakebe H."/>
            <person name="Hishigaki H."/>
            <person name="Watanabe T."/>
            <person name="Sugiyama A."/>
            <person name="Takemoto M."/>
            <person name="Kawakami B."/>
            <person name="Yamazaki M."/>
            <person name="Watanabe K."/>
            <person name="Kumagai A."/>
            <person name="Itakura S."/>
            <person name="Fukuzumi Y."/>
            <person name="Fujimori Y."/>
            <person name="Komiyama M."/>
            <person name="Tashiro H."/>
            <person name="Tanigami A."/>
            <person name="Fujiwara T."/>
            <person name="Ono T."/>
            <person name="Yamada K."/>
            <person name="Fujii Y."/>
            <person name="Ozaki K."/>
            <person name="Hirao M."/>
            <person name="Ohmori Y."/>
            <person name="Kawabata A."/>
            <person name="Hikiji T."/>
            <person name="Kobatake N."/>
            <person name="Inagaki H."/>
            <person name="Ikema Y."/>
            <person name="Okamoto S."/>
            <person name="Okitani R."/>
            <person name="Kawakami T."/>
            <person name="Noguchi S."/>
            <person name="Itoh T."/>
            <person name="Shigeta K."/>
            <person name="Senba T."/>
            <person name="Matsumura K."/>
            <person name="Nakajima Y."/>
            <person name="Mizuno T."/>
            <person name="Morinaga M."/>
            <person name="Sasaki M."/>
            <person name="Togashi T."/>
            <person name="Oyama M."/>
            <person name="Hata H."/>
            <person name="Watanabe M."/>
            <person name="Komatsu T."/>
            <person name="Mizushima-Sugano J."/>
            <person name="Satoh T."/>
            <person name="Shirai Y."/>
            <person name="Takahashi Y."/>
            <person name="Nakagawa K."/>
            <person name="Okumura K."/>
            <person name="Nagase T."/>
            <person name="Nomura N."/>
            <person name="Kikuchi H."/>
            <person name="Masuho Y."/>
            <person name="Yamashita R."/>
            <person name="Nakai K."/>
            <person name="Yada T."/>
            <person name="Nakamura Y."/>
            <person name="Ohara O."/>
            <person name="Isogai T."/>
            <person name="Sugano S."/>
        </authorList>
    </citation>
    <scope>NUCLEOTIDE SEQUENCE [LARGE SCALE MRNA] (ISOFORMS 1 AND 4)</scope>
    <source>
        <tissue>Testis</tissue>
    </source>
</reference>
<reference key="2">
    <citation type="journal article" date="2001" name="Nature">
        <title>The DNA sequence and comparative analysis of human chromosome 20.</title>
        <authorList>
            <person name="Deloukas P."/>
            <person name="Matthews L.H."/>
            <person name="Ashurst J.L."/>
            <person name="Burton J."/>
            <person name="Gilbert J.G.R."/>
            <person name="Jones M."/>
            <person name="Stavrides G."/>
            <person name="Almeida J.P."/>
            <person name="Babbage A.K."/>
            <person name="Bagguley C.L."/>
            <person name="Bailey J."/>
            <person name="Barlow K.F."/>
            <person name="Bates K.N."/>
            <person name="Beard L.M."/>
            <person name="Beare D.M."/>
            <person name="Beasley O.P."/>
            <person name="Bird C.P."/>
            <person name="Blakey S.E."/>
            <person name="Bridgeman A.M."/>
            <person name="Brown A.J."/>
            <person name="Buck D."/>
            <person name="Burrill W.D."/>
            <person name="Butler A.P."/>
            <person name="Carder C."/>
            <person name="Carter N.P."/>
            <person name="Chapman J.C."/>
            <person name="Clamp M."/>
            <person name="Clark G."/>
            <person name="Clark L.N."/>
            <person name="Clark S.Y."/>
            <person name="Clee C.M."/>
            <person name="Clegg S."/>
            <person name="Cobley V.E."/>
            <person name="Collier R.E."/>
            <person name="Connor R.E."/>
            <person name="Corby N.R."/>
            <person name="Coulson A."/>
            <person name="Coville G.J."/>
            <person name="Deadman R."/>
            <person name="Dhami P.D."/>
            <person name="Dunn M."/>
            <person name="Ellington A.G."/>
            <person name="Frankland J.A."/>
            <person name="Fraser A."/>
            <person name="French L."/>
            <person name="Garner P."/>
            <person name="Grafham D.V."/>
            <person name="Griffiths C."/>
            <person name="Griffiths M.N.D."/>
            <person name="Gwilliam R."/>
            <person name="Hall R.E."/>
            <person name="Hammond S."/>
            <person name="Harley J.L."/>
            <person name="Heath P.D."/>
            <person name="Ho S."/>
            <person name="Holden J.L."/>
            <person name="Howden P.J."/>
            <person name="Huckle E."/>
            <person name="Hunt A.R."/>
            <person name="Hunt S.E."/>
            <person name="Jekosch K."/>
            <person name="Johnson C.M."/>
            <person name="Johnson D."/>
            <person name="Kay M.P."/>
            <person name="Kimberley A.M."/>
            <person name="King A."/>
            <person name="Knights A."/>
            <person name="Laird G.K."/>
            <person name="Lawlor S."/>
            <person name="Lehvaeslaiho M.H."/>
            <person name="Leversha M.A."/>
            <person name="Lloyd C."/>
            <person name="Lloyd D.M."/>
            <person name="Lovell J.D."/>
            <person name="Marsh V.L."/>
            <person name="Martin S.L."/>
            <person name="McConnachie L.J."/>
            <person name="McLay K."/>
            <person name="McMurray A.A."/>
            <person name="Milne S.A."/>
            <person name="Mistry D."/>
            <person name="Moore M.J.F."/>
            <person name="Mullikin J.C."/>
            <person name="Nickerson T."/>
            <person name="Oliver K."/>
            <person name="Parker A."/>
            <person name="Patel R."/>
            <person name="Pearce T.A.V."/>
            <person name="Peck A.I."/>
            <person name="Phillimore B.J.C.T."/>
            <person name="Prathalingam S.R."/>
            <person name="Plumb R.W."/>
            <person name="Ramsay H."/>
            <person name="Rice C.M."/>
            <person name="Ross M.T."/>
            <person name="Scott C.E."/>
            <person name="Sehra H.K."/>
            <person name="Shownkeen R."/>
            <person name="Sims S."/>
            <person name="Skuce C.D."/>
            <person name="Smith M.L."/>
            <person name="Soderlund C."/>
            <person name="Steward C.A."/>
            <person name="Sulston J.E."/>
            <person name="Swann R.M."/>
            <person name="Sycamore N."/>
            <person name="Taylor R."/>
            <person name="Tee L."/>
            <person name="Thomas D.W."/>
            <person name="Thorpe A."/>
            <person name="Tracey A."/>
            <person name="Tromans A.C."/>
            <person name="Vaudin M."/>
            <person name="Wall M."/>
            <person name="Wallis J.M."/>
            <person name="Whitehead S.L."/>
            <person name="Whittaker P."/>
            <person name="Willey D.L."/>
            <person name="Williams L."/>
            <person name="Williams S.A."/>
            <person name="Wilming L."/>
            <person name="Wray P.W."/>
            <person name="Hubbard T."/>
            <person name="Durbin R.M."/>
            <person name="Bentley D.R."/>
            <person name="Beck S."/>
            <person name="Rogers J."/>
        </authorList>
    </citation>
    <scope>NUCLEOTIDE SEQUENCE [LARGE SCALE GENOMIC DNA]</scope>
    <scope>ALTERNATIVE SPLICING</scope>
</reference>
<reference key="3">
    <citation type="submission" date="2005-09" db="EMBL/GenBank/DDBJ databases">
        <authorList>
            <person name="Mural R.J."/>
            <person name="Istrail S."/>
            <person name="Sutton G.G."/>
            <person name="Florea L."/>
            <person name="Halpern A.L."/>
            <person name="Mobarry C.M."/>
            <person name="Lippert R."/>
            <person name="Walenz B."/>
            <person name="Shatkay H."/>
            <person name="Dew I."/>
            <person name="Miller J.R."/>
            <person name="Flanigan M.J."/>
            <person name="Edwards N.J."/>
            <person name="Bolanos R."/>
            <person name="Fasulo D."/>
            <person name="Halldorsson B.V."/>
            <person name="Hannenhalli S."/>
            <person name="Turner R."/>
            <person name="Yooseph S."/>
            <person name="Lu F."/>
            <person name="Nusskern D.R."/>
            <person name="Shue B.C."/>
            <person name="Zheng X.H."/>
            <person name="Zhong F."/>
            <person name="Delcher A.L."/>
            <person name="Huson D.H."/>
            <person name="Kravitz S.A."/>
            <person name="Mouchard L."/>
            <person name="Reinert K."/>
            <person name="Remington K.A."/>
            <person name="Clark A.G."/>
            <person name="Waterman M.S."/>
            <person name="Eichler E.E."/>
            <person name="Adams M.D."/>
            <person name="Hunkapiller M.W."/>
            <person name="Myers E.W."/>
            <person name="Venter J.C."/>
        </authorList>
    </citation>
    <scope>NUCLEOTIDE SEQUENCE [LARGE SCALE GENOMIC DNA]</scope>
</reference>
<reference key="4">
    <citation type="journal article" date="2004" name="Genome Res.">
        <title>The status, quality, and expansion of the NIH full-length cDNA project: the Mammalian Gene Collection (MGC).</title>
        <authorList>
            <consortium name="The MGC Project Team"/>
        </authorList>
    </citation>
    <scope>NUCLEOTIDE SEQUENCE [LARGE SCALE MRNA] (ISOFORMS 2 AND 3)</scope>
    <source>
        <tissue>Brain</tissue>
        <tissue>PNS</tissue>
    </source>
</reference>
<reference key="5">
    <citation type="journal article" date="2004" name="J. Biol. Chem.">
        <title>VHY, a novel myristoylated testis-restricted dual specificity protein phosphatase related to VHX.</title>
        <authorList>
            <person name="Alonso A."/>
            <person name="Narisawa S."/>
            <person name="Bogetz J."/>
            <person name="Tautz L."/>
            <person name="Hadzic R."/>
            <person name="Huynh H."/>
            <person name="Williams S."/>
            <person name="Gjoerloff-Wingren A."/>
            <person name="Bremer M.C.D."/>
            <person name="Holsinger L.J."/>
            <person name="Millan J.L."/>
            <person name="Mustelin T."/>
        </authorList>
    </citation>
    <scope>FUNCTION</scope>
    <scope>MUTAGENESIS OF CYS-85</scope>
    <scope>MYRISTOYLATION AT GLY-2 (ISOFORM 3)</scope>
    <scope>SUBCELLULAR LOCATION</scope>
    <scope>TISSUE SPECIFICITY</scope>
</reference>
<reference key="6">
    <citation type="journal article" date="2012" name="PLoS ONE">
        <title>Identification of VHY/Dusp15 as a regulator of oligodendrocyte differentiation through a systematic genomics approach.</title>
        <authorList>
            <person name="Schmidt F."/>
            <person name="van den Eijnden M."/>
            <person name="Pescini Gobert R."/>
            <person name="Saborio G.P."/>
            <person name="Carboni S."/>
            <person name="Alliod C."/>
            <person name="Pouly S."/>
            <person name="Staugaitis S.M."/>
            <person name="Dutta R."/>
            <person name="Trapp B."/>
            <person name="Hooft van Huijsduijnen R."/>
        </authorList>
    </citation>
    <scope>CATALYTIC ACTIVITY</scope>
    <scope>TISSUE SPECIFICITY</scope>
</reference>
<reference key="7">
    <citation type="journal article" date="2005" name="Proteins">
        <title>Crystal structure of the catalytic domain of human VHY, a dual-specificity protein phosphatase.</title>
        <authorList>
            <person name="Yoon T.-S."/>
            <person name="Jeong D.G."/>
            <person name="Kim J.H."/>
            <person name="Cho Y.H."/>
            <person name="Son J.H."/>
            <person name="Lee J.W."/>
            <person name="Ryu S.E."/>
            <person name="Kim S.J."/>
        </authorList>
    </citation>
    <scope>X-RAY CRYSTALLOGRAPHY (2.4 ANGSTROMS) OF 1-157 (ISOFORM 3)</scope>
</reference>
<evidence type="ECO:0000250" key="1">
    <source>
        <dbReference type="UniProtKB" id="B4F7B7"/>
    </source>
</evidence>
<evidence type="ECO:0000250" key="2">
    <source>
        <dbReference type="UniProtKB" id="Q8R4V2"/>
    </source>
</evidence>
<evidence type="ECO:0000255" key="3">
    <source>
        <dbReference type="PROSITE-ProRule" id="PRU00160"/>
    </source>
</evidence>
<evidence type="ECO:0000255" key="4">
    <source>
        <dbReference type="PROSITE-ProRule" id="PRU10044"/>
    </source>
</evidence>
<evidence type="ECO:0000256" key="5">
    <source>
        <dbReference type="SAM" id="MobiDB-lite"/>
    </source>
</evidence>
<evidence type="ECO:0000269" key="6">
    <source>
    </source>
</evidence>
<evidence type="ECO:0000269" key="7">
    <source>
    </source>
</evidence>
<evidence type="ECO:0000303" key="8">
    <source>
    </source>
</evidence>
<evidence type="ECO:0000303" key="9">
    <source>
    </source>
</evidence>
<evidence type="ECO:0000303" key="10">
    <source>
    </source>
</evidence>
<evidence type="ECO:0000305" key="11"/>
<evidence type="ECO:0000305" key="12">
    <source>
    </source>
</evidence>
<evidence type="ECO:0000312" key="13">
    <source>
        <dbReference type="HGNC" id="HGNC:16236"/>
    </source>
</evidence>
<evidence type="ECO:0007829" key="14">
    <source>
        <dbReference type="PDB" id="1YZ4"/>
    </source>
</evidence>
<protein>
    <recommendedName>
        <fullName evidence="13">Dual specificity protein phosphatase 15</fullName>
        <ecNumber evidence="4 7">3.1.3.16</ecNumber>
        <ecNumber evidence="4 7">3.1.3.48</ecNumber>
    </recommendedName>
    <alternativeName>
        <fullName evidence="9">VH1-related member Y</fullName>
    </alternativeName>
    <alternativeName>
        <fullName evidence="12">Vaccinia virus VH1-related dual-specific protein phosphatase Y</fullName>
    </alternativeName>
</protein>
<proteinExistence type="evidence at protein level"/>
<accession>Q9H1R2</accession>
<accession>A6NH79</accession>
<accession>A8MVC8</accession>
<accession>Q5QP62</accession>
<accession>Q5QP63</accession>
<accession>Q5QP65</accession>
<accession>Q6PGN7</accession>
<accession>Q8N826</accession>
<accession>Q9BX24</accession>
<sequence>MTEGVLPGLYLGNFIDAKDLDQLGRNKITHIISIHESPQPLLQDITYLRIPVADTPEVPIKKHFKECINFIHCCRLNGGNCLVHCFAGISRSTTIVTAYVMTVTGLGWRDVLEAIKATRPIANPNPGFRQQLEEFGWASSQKGARHRTSKTSGAQCPPMTSATCLLAARVALLSAALVREATGRTAQRCRLSPRAAAERLLGPPPHVAAGWSPDPKYQICLCFGEEDPGPTQHPKEQLIMADVQVQLRPGSSSCTLSASTERPDGSSTPGNPDGITHLQCSCLHPKRAASSSCTR</sequence>
<dbReference type="EC" id="3.1.3.16" evidence="4 7"/>
<dbReference type="EC" id="3.1.3.48" evidence="4 7"/>
<dbReference type="EMBL" id="AK091960">
    <property type="protein sequence ID" value="BAG52450.1"/>
    <property type="molecule type" value="mRNA"/>
</dbReference>
<dbReference type="EMBL" id="AK097430">
    <property type="protein sequence ID" value="BAC05048.1"/>
    <property type="molecule type" value="mRNA"/>
</dbReference>
<dbReference type="EMBL" id="AL160175">
    <property type="status" value="NOT_ANNOTATED_CDS"/>
    <property type="molecule type" value="Genomic_DNA"/>
</dbReference>
<dbReference type="EMBL" id="CH471077">
    <property type="protein sequence ID" value="EAW76410.1"/>
    <property type="molecule type" value="Genomic_DNA"/>
</dbReference>
<dbReference type="EMBL" id="BC056911">
    <property type="protein sequence ID" value="AAH56911.1"/>
    <property type="molecule type" value="mRNA"/>
</dbReference>
<dbReference type="EMBL" id="BM554314">
    <property type="status" value="NOT_ANNOTATED_CDS"/>
    <property type="molecule type" value="mRNA"/>
</dbReference>
<dbReference type="CCDS" id="CCDS13193.1">
    <molecule id="Q9H1R2-3"/>
</dbReference>
<dbReference type="CCDS" id="CCDS42862.1">
    <molecule id="Q9H1R2-4"/>
</dbReference>
<dbReference type="CCDS" id="CCDS82606.1">
    <molecule id="Q9H1R2-1"/>
</dbReference>
<dbReference type="CCDS" id="CCDS82607.1">
    <molecule id="Q9H1R2-2"/>
</dbReference>
<dbReference type="RefSeq" id="NP_001012662.1">
    <molecule id="Q9H1R2-4"/>
    <property type="nucleotide sequence ID" value="NM_001012644.3"/>
</dbReference>
<dbReference type="RefSeq" id="NP_001307407.1">
    <molecule id="Q9H1R2-2"/>
    <property type="nucleotide sequence ID" value="NM_001320478.1"/>
</dbReference>
<dbReference type="RefSeq" id="NP_001307408.1">
    <molecule id="Q9H1R2-1"/>
    <property type="nucleotide sequence ID" value="NM_001320479.1"/>
</dbReference>
<dbReference type="RefSeq" id="NP_542178.2">
    <molecule id="Q9H1R2-3"/>
    <property type="nucleotide sequence ID" value="NM_080611.4"/>
</dbReference>
<dbReference type="RefSeq" id="NP_817130.1">
    <molecule id="Q9H1R2-4"/>
    <property type="nucleotide sequence ID" value="NM_177991.3"/>
</dbReference>
<dbReference type="RefSeq" id="XP_047295847.1">
    <molecule id="Q9H1R2-4"/>
    <property type="nucleotide sequence ID" value="XM_047439891.1"/>
</dbReference>
<dbReference type="PDB" id="1YZ4">
    <property type="method" value="X-ray"/>
    <property type="resolution" value="2.40 A"/>
    <property type="chains" value="A/B=5-145"/>
</dbReference>
<dbReference type="PDBsum" id="1YZ4"/>
<dbReference type="SMR" id="Q9H1R2"/>
<dbReference type="BioGRID" id="126164">
    <property type="interactions" value="37"/>
</dbReference>
<dbReference type="FunCoup" id="Q9H1R2">
    <property type="interactions" value="93"/>
</dbReference>
<dbReference type="IntAct" id="Q9H1R2">
    <property type="interactions" value="26"/>
</dbReference>
<dbReference type="MINT" id="Q9H1R2"/>
<dbReference type="STRING" id="9606.ENSP00000278979"/>
<dbReference type="BindingDB" id="Q9H1R2"/>
<dbReference type="ChEMBL" id="CHEMBL2396507"/>
<dbReference type="DEPOD" id="DUSP15"/>
<dbReference type="GlyGen" id="Q9H1R2">
    <property type="glycosylation" value="1 site"/>
</dbReference>
<dbReference type="iPTMnet" id="Q9H1R2"/>
<dbReference type="PhosphoSitePlus" id="Q9H1R2"/>
<dbReference type="SwissPalm" id="Q9H1R2"/>
<dbReference type="BioMuta" id="DUSP15"/>
<dbReference type="DMDM" id="30316387"/>
<dbReference type="jPOST" id="Q9H1R2"/>
<dbReference type="MassIVE" id="Q9H1R2"/>
<dbReference type="PaxDb" id="9606-ENSP00000341658"/>
<dbReference type="PeptideAtlas" id="Q9H1R2"/>
<dbReference type="ProteomicsDB" id="80441">
    <molecule id="Q9H1R2-1"/>
</dbReference>
<dbReference type="ProteomicsDB" id="80442">
    <molecule id="Q9H1R2-2"/>
</dbReference>
<dbReference type="ProteomicsDB" id="80443">
    <molecule id="Q9H1R2-3"/>
</dbReference>
<dbReference type="ProteomicsDB" id="80444">
    <molecule id="Q9H1R2-4"/>
</dbReference>
<dbReference type="Antibodypedia" id="25257">
    <property type="antibodies" value="210 antibodies from 25 providers"/>
</dbReference>
<dbReference type="DNASU" id="128853"/>
<dbReference type="Ensembl" id="ENST00000278979.7">
    <molecule id="Q9H1R2-1"/>
    <property type="protein sequence ID" value="ENSP00000278979.3"/>
    <property type="gene ID" value="ENSG00000149599.16"/>
</dbReference>
<dbReference type="Ensembl" id="ENST00000339738.10">
    <molecule id="Q9H1R2-3"/>
    <property type="protein sequence ID" value="ENSP00000341658.5"/>
    <property type="gene ID" value="ENSG00000149599.16"/>
</dbReference>
<dbReference type="Ensembl" id="ENST00000375966.8">
    <molecule id="Q9H1R2-2"/>
    <property type="protein sequence ID" value="ENSP00000365133.4"/>
    <property type="gene ID" value="ENSG00000149599.16"/>
</dbReference>
<dbReference type="Ensembl" id="ENST00000398083.5">
    <molecule id="Q9H1R2-4"/>
    <property type="protein sequence ID" value="ENSP00000381157.1"/>
    <property type="gene ID" value="ENSG00000149599.16"/>
</dbReference>
<dbReference type="Ensembl" id="ENST00000398084.6">
    <molecule id="Q9H1R2-4"/>
    <property type="protein sequence ID" value="ENSP00000381158.2"/>
    <property type="gene ID" value="ENSG00000149599.16"/>
</dbReference>
<dbReference type="Ensembl" id="ENST00000486996.5">
    <molecule id="Q9H1R2-4"/>
    <property type="protein sequence ID" value="ENSP00000419818.1"/>
    <property type="gene ID" value="ENSG00000149599.16"/>
</dbReference>
<dbReference type="GeneID" id="128853"/>
<dbReference type="KEGG" id="hsa:128853"/>
<dbReference type="MANE-Select" id="ENST00000339738.10">
    <molecule id="Q9H1R2-3"/>
    <property type="protein sequence ID" value="ENSP00000341658.5"/>
    <property type="RefSeq nucleotide sequence ID" value="NM_080611.5"/>
    <property type="RefSeq protein sequence ID" value="NP_542178.2"/>
</dbReference>
<dbReference type="UCSC" id="uc002wwu.2">
    <molecule id="Q9H1R2-1"/>
    <property type="organism name" value="human"/>
</dbReference>
<dbReference type="AGR" id="HGNC:16236"/>
<dbReference type="CTD" id="128853"/>
<dbReference type="DisGeNET" id="128853"/>
<dbReference type="GeneCards" id="DUSP15"/>
<dbReference type="HGNC" id="HGNC:16236">
    <property type="gene designation" value="DUSP15"/>
</dbReference>
<dbReference type="HPA" id="ENSG00000149599">
    <property type="expression patterns" value="Tissue enriched (testis)"/>
</dbReference>
<dbReference type="MIM" id="616776">
    <property type="type" value="gene"/>
</dbReference>
<dbReference type="neXtProt" id="NX_Q9H1R2"/>
<dbReference type="OpenTargets" id="ENSG00000149599"/>
<dbReference type="PharmGKB" id="PA27524"/>
<dbReference type="VEuPathDB" id="HostDB:ENSG00000149599"/>
<dbReference type="eggNOG" id="KOG1716">
    <property type="taxonomic scope" value="Eukaryota"/>
</dbReference>
<dbReference type="GeneTree" id="ENSGT00940000162011"/>
<dbReference type="HOGENOM" id="CLU_979904_0_0_1"/>
<dbReference type="InParanoid" id="Q9H1R2"/>
<dbReference type="OMA" id="YIMAVTE"/>
<dbReference type="OrthoDB" id="9979246at2759"/>
<dbReference type="PAN-GO" id="Q9H1R2">
    <property type="GO annotations" value="5 GO annotations based on evolutionary models"/>
</dbReference>
<dbReference type="PhylomeDB" id="Q9H1R2"/>
<dbReference type="TreeFam" id="TF105126"/>
<dbReference type="PathwayCommons" id="Q9H1R2"/>
<dbReference type="SABIO-RK" id="Q9H1R2"/>
<dbReference type="SignaLink" id="Q9H1R2"/>
<dbReference type="BioGRID-ORCS" id="128853">
    <property type="hits" value="8 hits in 1170 CRISPR screens"/>
</dbReference>
<dbReference type="EvolutionaryTrace" id="Q9H1R2"/>
<dbReference type="GeneWiki" id="DUSP15"/>
<dbReference type="GenomeRNAi" id="128853"/>
<dbReference type="Pharos" id="Q9H1R2">
    <property type="development level" value="Tbio"/>
</dbReference>
<dbReference type="PRO" id="PR:Q9H1R2"/>
<dbReference type="Proteomes" id="UP000005640">
    <property type="component" value="Chromosome 20"/>
</dbReference>
<dbReference type="RNAct" id="Q9H1R2">
    <property type="molecule type" value="protein"/>
</dbReference>
<dbReference type="Bgee" id="ENSG00000149599">
    <property type="expression patterns" value="Expressed in left testis and 144 other cell types or tissues"/>
</dbReference>
<dbReference type="ExpressionAtlas" id="Q9H1R2">
    <property type="expression patterns" value="baseline and differential"/>
</dbReference>
<dbReference type="GO" id="GO:0005829">
    <property type="term" value="C:cytosol"/>
    <property type="evidence" value="ECO:0000314"/>
    <property type="project" value="HPA"/>
</dbReference>
<dbReference type="GO" id="GO:0005886">
    <property type="term" value="C:plasma membrane"/>
    <property type="evidence" value="ECO:0000314"/>
    <property type="project" value="HPA"/>
</dbReference>
<dbReference type="GO" id="GO:0016791">
    <property type="term" value="F:phosphatase activity"/>
    <property type="evidence" value="ECO:0000314"/>
    <property type="project" value="UniProtKB"/>
</dbReference>
<dbReference type="GO" id="GO:0004722">
    <property type="term" value="F:protein serine/threonine phosphatase activity"/>
    <property type="evidence" value="ECO:0007669"/>
    <property type="project" value="UniProtKB-EC"/>
</dbReference>
<dbReference type="GO" id="GO:0004725">
    <property type="term" value="F:protein tyrosine phosphatase activity"/>
    <property type="evidence" value="ECO:0000314"/>
    <property type="project" value="UniProtKB"/>
</dbReference>
<dbReference type="GO" id="GO:0008138">
    <property type="term" value="F:protein tyrosine/serine/threonine phosphatase activity"/>
    <property type="evidence" value="ECO:0000314"/>
    <property type="project" value="UniProtKB"/>
</dbReference>
<dbReference type="GO" id="GO:0016311">
    <property type="term" value="P:dephosphorylation"/>
    <property type="evidence" value="ECO:0000314"/>
    <property type="project" value="UniProtKB"/>
</dbReference>
<dbReference type="GO" id="GO:0000122">
    <property type="term" value="P:negative regulation of transcription by RNA polymerase II"/>
    <property type="evidence" value="ECO:0007669"/>
    <property type="project" value="Ensembl"/>
</dbReference>
<dbReference type="GO" id="GO:0070374">
    <property type="term" value="P:positive regulation of ERK1 and ERK2 cascade"/>
    <property type="evidence" value="ECO:0000318"/>
    <property type="project" value="GO_Central"/>
</dbReference>
<dbReference type="GO" id="GO:0048713">
    <property type="term" value="P:regulation of oligodendrocyte differentiation"/>
    <property type="evidence" value="ECO:0007669"/>
    <property type="project" value="Ensembl"/>
</dbReference>
<dbReference type="GO" id="GO:0007165">
    <property type="term" value="P:signal transduction"/>
    <property type="evidence" value="ECO:0000318"/>
    <property type="project" value="GO_Central"/>
</dbReference>
<dbReference type="FunFam" id="3.90.190.10:FF:000052">
    <property type="entry name" value="Dual specificity phosphatase 15"/>
    <property type="match status" value="1"/>
</dbReference>
<dbReference type="Gene3D" id="3.90.190.10">
    <property type="entry name" value="Protein tyrosine phosphatase superfamily"/>
    <property type="match status" value="1"/>
</dbReference>
<dbReference type="InterPro" id="IPR000340">
    <property type="entry name" value="Dual-sp_phosphatase_cat-dom"/>
</dbReference>
<dbReference type="InterPro" id="IPR029021">
    <property type="entry name" value="Prot-tyrosine_phosphatase-like"/>
</dbReference>
<dbReference type="InterPro" id="IPR008984">
    <property type="entry name" value="SMAD_FHA_dom_sf"/>
</dbReference>
<dbReference type="InterPro" id="IPR016130">
    <property type="entry name" value="Tyr_Pase_AS"/>
</dbReference>
<dbReference type="InterPro" id="IPR000387">
    <property type="entry name" value="Tyr_Pase_dom"/>
</dbReference>
<dbReference type="InterPro" id="IPR020422">
    <property type="entry name" value="TYR_PHOSPHATASE_DUAL_dom"/>
</dbReference>
<dbReference type="PANTHER" id="PTHR45948:SF4">
    <property type="entry name" value="DUAL SPECIFICITY PROTEIN PHOSPHATASE 15"/>
    <property type="match status" value="1"/>
</dbReference>
<dbReference type="PANTHER" id="PTHR45948">
    <property type="entry name" value="DUAL SPECIFICITY PROTEIN PHOSPHATASE DDB_G0269404-RELATED"/>
    <property type="match status" value="1"/>
</dbReference>
<dbReference type="Pfam" id="PF00782">
    <property type="entry name" value="DSPc"/>
    <property type="match status" value="1"/>
</dbReference>
<dbReference type="PRINTS" id="PR01908">
    <property type="entry name" value="ADSPHPHTASE"/>
</dbReference>
<dbReference type="SMART" id="SM00195">
    <property type="entry name" value="DSPc"/>
    <property type="match status" value="1"/>
</dbReference>
<dbReference type="SUPFAM" id="SSF52799">
    <property type="entry name" value="(Phosphotyrosine protein) phosphatases II"/>
    <property type="match status" value="1"/>
</dbReference>
<dbReference type="SUPFAM" id="SSF49879">
    <property type="entry name" value="SMAD/FHA domain"/>
    <property type="match status" value="1"/>
</dbReference>
<dbReference type="PROSITE" id="PS00383">
    <property type="entry name" value="TYR_PHOSPHATASE_1"/>
    <property type="match status" value="1"/>
</dbReference>
<dbReference type="PROSITE" id="PS50056">
    <property type="entry name" value="TYR_PHOSPHATASE_2"/>
    <property type="match status" value="1"/>
</dbReference>
<dbReference type="PROSITE" id="PS50054">
    <property type="entry name" value="TYR_PHOSPHATASE_DUAL"/>
    <property type="match status" value="1"/>
</dbReference>
<name>DUS15_HUMAN</name>